<feature type="chain" id="PRO_0000446225" description="Alstonine synthase">
    <location>
        <begin position="1"/>
        <end position="516"/>
    </location>
</feature>
<feature type="transmembrane region" description="Helical" evidence="3">
    <location>
        <begin position="6"/>
        <end position="26"/>
    </location>
</feature>
<feature type="binding site" description="axial binding residue" evidence="2">
    <location>
        <position position="453"/>
    </location>
    <ligand>
        <name>heme</name>
        <dbReference type="ChEBI" id="CHEBI:30413"/>
    </ligand>
    <ligandPart>
        <name>Fe</name>
        <dbReference type="ChEBI" id="CHEBI:18248"/>
    </ligandPart>
</feature>
<feature type="mutagenesis site" description="No effect on activity towards tetrahydroalstonine." evidence="4">
    <original>V</original>
    <variation>A</variation>
    <location>
        <position position="126"/>
    </location>
</feature>
<feature type="mutagenesis site" description="Reduces activity towards tetrahydroalstonine." evidence="4">
    <original>K</original>
    <variation>R</variation>
    <location>
        <position position="212"/>
    </location>
</feature>
<feature type="mutagenesis site" description="Acquires the capacity to convert geissoschizine to polyneuridine aldehyde; no effect on activity towards tetrahydroalstonine." evidence="4">
    <original>S</original>
    <variation>A</variation>
    <location>
        <position position="220"/>
    </location>
</feature>
<feature type="mutagenesis site" description="Reduces activity towards tetrahydroalstonine." evidence="4">
    <original>V</original>
    <variation>I</variation>
    <location>
        <position position="308"/>
    </location>
</feature>
<feature type="mutagenesis site" description="Acquires the capacity to convert geissoschizine to polyneuridine aldehyde; slightly increases activity towards tetrahydroalstonine." evidence="4">
    <original>E</original>
    <variation>W</variation>
    <location>
        <position position="310"/>
    </location>
</feature>
<feature type="mutagenesis site" description="Acquires the capacity to convert geissoschizine to polyneuridine aldehyde; slightly increases activity towards tetrahydroalstonine." evidence="4">
    <original>V</original>
    <variation>I</variation>
    <location>
        <position position="452"/>
    </location>
</feature>
<name>C71Y1_CATRO</name>
<organism>
    <name type="scientific">Catharanthus roseus</name>
    <name type="common">Madagascar periwinkle</name>
    <name type="synonym">Vinca rosea</name>
    <dbReference type="NCBI Taxonomy" id="4058"/>
    <lineage>
        <taxon>Eukaryota</taxon>
        <taxon>Viridiplantae</taxon>
        <taxon>Streptophyta</taxon>
        <taxon>Embryophyta</taxon>
        <taxon>Tracheophyta</taxon>
        <taxon>Spermatophyta</taxon>
        <taxon>Magnoliopsida</taxon>
        <taxon>eudicotyledons</taxon>
        <taxon>Gunneridae</taxon>
        <taxon>Pentapetalae</taxon>
        <taxon>asterids</taxon>
        <taxon>lamiids</taxon>
        <taxon>Gentianales</taxon>
        <taxon>Apocynaceae</taxon>
        <taxon>Rauvolfioideae</taxon>
        <taxon>Vinceae</taxon>
        <taxon>Catharanthinae</taxon>
        <taxon>Catharanthus</taxon>
    </lineage>
</organism>
<accession>W8JDE2</accession>
<accession>Q9AW94</accession>
<sequence length="516" mass="57776">MDQLMNFSLTSPIFLLLSSLFLIILLNKLMRGNKIQKGKKLPPGPKKIAIIGNLPSNGRFTSLIVFLNNLAEKYGPIMHLRIGQLSAVIISSAEKAKEILNTHGVRVADRPQTTVAKIMLYNSLGVTFAPYGDYLKQLRQIYAMELLSPKTVKSFWTIMDDELSTMITSIKSEVGQPMILHDKMMTYLYAMLCRATVGSVCNGRETLIMAAKETSALSASIRIEDLFPSVKILPVISGLKSKLTNLLKELDIVLEDIISAREKKLLSQPQQPLMLDEEDMLGVLLKYKNGKGNDTKFRVTNNDIKAIVFELILAGTLSSAAIVEWCMSELMKNPELLKKAQDEVRQVLKGKKTISGSDVGKLEYVKMVVKESVRLHPPAPLLFPRECREEFEIDGMTIPKKSWVIINYWAIGRDPKIWPNADKFEPERFSNNNIDFYGSNFELIPFGAGRRVCPGILFGTTNVELLLAAFLFHFDWELPGGMKPEELDMNELFGAGCIRENPLCLIPSISTVVEGN</sequence>
<comment type="function">
    <text evidence="4">Involved in monoterpene indole alkaloids (MIAs) biosynthesis (PubMed:29942076). Converts by aromatization the tetrahydro-beta-carboline alkaloids tetrahydroalstonine and ajmalicine to the corresponding beta-carboline alkaloids alstonine and serpentine, respectively (PubMed:29942076).</text>
</comment>
<comment type="catalytic activity">
    <reaction evidence="4">
        <text>tetrahydroalstonine + A + reduced [NADPH--hemoprotein reductase] + O2 = alstonine + AH2 + oxidized [NADPH--hemoprotein reductase] + 2 H2O + H(+)</text>
        <dbReference type="Rhea" id="RHEA:58128"/>
        <dbReference type="Rhea" id="RHEA-COMP:11964"/>
        <dbReference type="Rhea" id="RHEA-COMP:11965"/>
        <dbReference type="ChEBI" id="CHEBI:13193"/>
        <dbReference type="ChEBI" id="CHEBI:15377"/>
        <dbReference type="ChEBI" id="CHEBI:15378"/>
        <dbReference type="ChEBI" id="CHEBI:15379"/>
        <dbReference type="ChEBI" id="CHEBI:17499"/>
        <dbReference type="ChEBI" id="CHEBI:57618"/>
        <dbReference type="ChEBI" id="CHEBI:58210"/>
        <dbReference type="ChEBI" id="CHEBI:142526"/>
        <dbReference type="ChEBI" id="CHEBI:142530"/>
    </reaction>
</comment>
<comment type="catalytic activity">
    <reaction evidence="4">
        <text>ajmalicine + A + reduced [NADPH--hemoprotein reductase] + O2 = serpentine + AH2 + oxidized [NADPH--hemoprotein reductase] + 2 H2O + H(+)</text>
        <dbReference type="Rhea" id="RHEA:58132"/>
        <dbReference type="Rhea" id="RHEA-COMP:11964"/>
        <dbReference type="Rhea" id="RHEA-COMP:11965"/>
        <dbReference type="ChEBI" id="CHEBI:13193"/>
        <dbReference type="ChEBI" id="CHEBI:15377"/>
        <dbReference type="ChEBI" id="CHEBI:15378"/>
        <dbReference type="ChEBI" id="CHEBI:15379"/>
        <dbReference type="ChEBI" id="CHEBI:17499"/>
        <dbReference type="ChEBI" id="CHEBI:57618"/>
        <dbReference type="ChEBI" id="CHEBI:58210"/>
        <dbReference type="ChEBI" id="CHEBI:142527"/>
        <dbReference type="ChEBI" id="CHEBI:142531"/>
    </reaction>
</comment>
<comment type="cofactor">
    <cofactor evidence="2">
        <name>heme</name>
        <dbReference type="ChEBI" id="CHEBI:30413"/>
    </cofactor>
</comment>
<comment type="biophysicochemical properties">
    <kinetics>
        <KM evidence="4">19.6 uM for tetrahydroalstonine</KM>
    </kinetics>
</comment>
<comment type="pathway">
    <text evidence="8">Alkaloid biosynthesis.</text>
</comment>
<comment type="subcellular location">
    <subcellularLocation>
        <location evidence="1">Endoplasmic reticulum membrane</location>
        <topology evidence="3">Single-pass type II membrane protein</topology>
    </subcellularLocation>
</comment>
<comment type="tissue specificity">
    <text evidence="4">Highly expressed in stems (PubMed:29942076). Expressed at low levels in roots (PubMed:29942076).</text>
</comment>
<comment type="similarity">
    <text evidence="8">Belongs to the cytochrome P450 family.</text>
</comment>
<comment type="online information" name="ORCAE database">
    <link uri="https://orcae.psb.ugent.be/taxa/catro/regular/v1/"/>
</comment>
<gene>
    <name evidence="5" type="primary">CYP71AY1</name>
    <name evidence="7" type="synonym">CYP71</name>
    <name evidence="5" type="ORF">Caros018961</name>
</gene>
<proteinExistence type="evidence at protein level"/>
<dbReference type="EC" id="1.14.14.-" evidence="4"/>
<dbReference type="EMBL" id="KF309243">
    <property type="protein sequence ID" value="AHK60849.1"/>
    <property type="molecule type" value="mRNA"/>
</dbReference>
<dbReference type="EMBL" id="AJ295719">
    <property type="protein sequence ID" value="CAC27827.1"/>
    <property type="molecule type" value="mRNA"/>
</dbReference>
<dbReference type="SMR" id="W8JDE2"/>
<dbReference type="KEGG" id="ag:AHK60849"/>
<dbReference type="SABIO-RK" id="W8JDE2"/>
<dbReference type="GO" id="GO:0005789">
    <property type="term" value="C:endoplasmic reticulum membrane"/>
    <property type="evidence" value="ECO:0007669"/>
    <property type="project" value="UniProtKB-SubCell"/>
</dbReference>
<dbReference type="GO" id="GO:0020037">
    <property type="term" value="F:heme binding"/>
    <property type="evidence" value="ECO:0007669"/>
    <property type="project" value="InterPro"/>
</dbReference>
<dbReference type="GO" id="GO:0005506">
    <property type="term" value="F:iron ion binding"/>
    <property type="evidence" value="ECO:0007669"/>
    <property type="project" value="InterPro"/>
</dbReference>
<dbReference type="GO" id="GO:0016712">
    <property type="term" value="F:oxidoreductase activity, acting on paired donors, with incorporation or reduction of molecular oxygen, reduced flavin or flavoprotein as one donor, and incorporation of one atom of oxygen"/>
    <property type="evidence" value="ECO:0000314"/>
    <property type="project" value="UniProtKB"/>
</dbReference>
<dbReference type="GO" id="GO:0009709">
    <property type="term" value="P:terpenoid indole alkaloid biosynthetic process"/>
    <property type="evidence" value="ECO:0000314"/>
    <property type="project" value="UniProtKB"/>
</dbReference>
<dbReference type="CDD" id="cd11072">
    <property type="entry name" value="CYP71-like"/>
    <property type="match status" value="1"/>
</dbReference>
<dbReference type="FunFam" id="1.10.630.10:FF:000097">
    <property type="entry name" value="Cytochrome P-450 19"/>
    <property type="match status" value="1"/>
</dbReference>
<dbReference type="Gene3D" id="1.10.630.10">
    <property type="entry name" value="Cytochrome P450"/>
    <property type="match status" value="1"/>
</dbReference>
<dbReference type="InterPro" id="IPR052306">
    <property type="entry name" value="CYP450_71D"/>
</dbReference>
<dbReference type="InterPro" id="IPR001128">
    <property type="entry name" value="Cyt_P450"/>
</dbReference>
<dbReference type="InterPro" id="IPR017972">
    <property type="entry name" value="Cyt_P450_CS"/>
</dbReference>
<dbReference type="InterPro" id="IPR002401">
    <property type="entry name" value="Cyt_P450_E_grp-I"/>
</dbReference>
<dbReference type="InterPro" id="IPR036396">
    <property type="entry name" value="Cyt_P450_sf"/>
</dbReference>
<dbReference type="PANTHER" id="PTHR47953:SF5">
    <property type="entry name" value="CYTOCHROME P450 71AV8-LIKE"/>
    <property type="match status" value="1"/>
</dbReference>
<dbReference type="PANTHER" id="PTHR47953">
    <property type="entry name" value="OS08G0105600 PROTEIN"/>
    <property type="match status" value="1"/>
</dbReference>
<dbReference type="Pfam" id="PF00067">
    <property type="entry name" value="p450"/>
    <property type="match status" value="1"/>
</dbReference>
<dbReference type="PRINTS" id="PR00463">
    <property type="entry name" value="EP450I"/>
</dbReference>
<dbReference type="PRINTS" id="PR00385">
    <property type="entry name" value="P450"/>
</dbReference>
<dbReference type="SUPFAM" id="SSF48264">
    <property type="entry name" value="Cytochrome P450"/>
    <property type="match status" value="1"/>
</dbReference>
<dbReference type="PROSITE" id="PS00086">
    <property type="entry name" value="CYTOCHROME_P450"/>
    <property type="match status" value="1"/>
</dbReference>
<keyword id="KW-0256">Endoplasmic reticulum</keyword>
<keyword id="KW-0349">Heme</keyword>
<keyword id="KW-0408">Iron</keyword>
<keyword id="KW-0472">Membrane</keyword>
<keyword id="KW-0479">Metal-binding</keyword>
<keyword id="KW-0503">Monooxygenase</keyword>
<keyword id="KW-0560">Oxidoreductase</keyword>
<keyword id="KW-0812">Transmembrane</keyword>
<keyword id="KW-1133">Transmembrane helix</keyword>
<evidence type="ECO:0000250" key="1">
    <source>
        <dbReference type="UniProtKB" id="P0DO13"/>
    </source>
</evidence>
<evidence type="ECO:0000250" key="2">
    <source>
        <dbReference type="UniProtKB" id="Q96242"/>
    </source>
</evidence>
<evidence type="ECO:0000255" key="3"/>
<evidence type="ECO:0000269" key="4">
    <source>
    </source>
</evidence>
<evidence type="ECO:0000303" key="5">
    <source>
    </source>
</evidence>
<evidence type="ECO:0000303" key="6">
    <source>
    </source>
</evidence>
<evidence type="ECO:0000303" key="7">
    <source>
    </source>
</evidence>
<evidence type="ECO:0000305" key="8"/>
<reference key="1">
    <citation type="journal article" date="2014" name="Nat. Commun.">
        <title>The seco-iridoid pathway from Catharanthus roseus.</title>
        <authorList>
            <person name="Miettinen K."/>
            <person name="Dong L."/>
            <person name="Navrot N."/>
            <person name="Schneider T."/>
            <person name="Burlat V."/>
            <person name="Pollier J."/>
            <person name="Woittiez L."/>
            <person name="van der Krol S."/>
            <person name="Lugan R."/>
            <person name="Ilc T."/>
            <person name="Verpoorte R."/>
            <person name="Oksman-Caldentey K.M."/>
            <person name="Martinoia E."/>
            <person name="Bouwmeester H."/>
            <person name="Goossens A."/>
            <person name="Memelink J."/>
            <person name="Werck-Reichhart D."/>
        </authorList>
    </citation>
    <scope>NUCLEOTIDE SEQUENCE [MRNA]</scope>
</reference>
<reference key="2">
    <citation type="journal article" date="1993" name="Plant Mol. Biol.">
        <title>Isolation of cytochrome P-450 cDNA clones from the higher plant Catharanthus roseus by a PCR strategy.</title>
        <authorList>
            <person name="Meijer A.H."/>
            <person name="Souer E."/>
            <person name="Verpoorte R."/>
            <person name="Hoge J.H.C."/>
        </authorList>
    </citation>
    <scope>NUCLEOTIDE SEQUENCE [MRNA] OF 6-516</scope>
    <source>
        <strain>cv. G. Don</strain>
    </source>
</reference>
<reference key="3">
    <citation type="journal article" date="2018" name="Nat. Chem. Biol.">
        <title>Sarpagan bridge enzyme has substrate-controlled cyclization and aromatization modes.</title>
        <authorList>
            <person name="Dang T.T."/>
            <person name="Franke J."/>
            <person name="Carqueijeiro I.S.T."/>
            <person name="Langley C."/>
            <person name="Courdavault V."/>
            <person name="O'Connor S.E."/>
        </authorList>
    </citation>
    <scope>FUNCTION</scope>
    <scope>CATALYTIC ACTIVITY</scope>
    <scope>BIOPHYSICOCHEMICAL PROPERTIES</scope>
    <scope>TISSUE SPECIFICITY</scope>
    <scope>MUTAGENESIS OF VAL-126; LYS-212; SER-220; VAL-308; GLU-310 AND VAL-452</scope>
</reference>
<protein>
    <recommendedName>
        <fullName evidence="6">Alstonine synthase</fullName>
        <shortName evidence="6">CrAS</shortName>
        <ecNumber evidence="4">1.14.14.-</ecNumber>
    </recommendedName>
    <alternativeName>
        <fullName evidence="6">Cytochrome P450 71AY1</fullName>
        <shortName evidence="6">CrCYP71AY1</shortName>
    </alternativeName>
</protein>